<gene>
    <name evidence="1" type="primary">gsiA</name>
    <name type="ordered locus">ECA2835</name>
</gene>
<organism>
    <name type="scientific">Pectobacterium atrosepticum (strain SCRI 1043 / ATCC BAA-672)</name>
    <name type="common">Erwinia carotovora subsp. atroseptica</name>
    <dbReference type="NCBI Taxonomy" id="218491"/>
    <lineage>
        <taxon>Bacteria</taxon>
        <taxon>Pseudomonadati</taxon>
        <taxon>Pseudomonadota</taxon>
        <taxon>Gammaproteobacteria</taxon>
        <taxon>Enterobacterales</taxon>
        <taxon>Pectobacteriaceae</taxon>
        <taxon>Pectobacterium</taxon>
    </lineage>
</organism>
<protein>
    <recommendedName>
        <fullName evidence="1">Glutathione import ATP-binding protein GsiA</fullName>
        <ecNumber evidence="1">7.4.2.10</ecNumber>
    </recommendedName>
</protein>
<evidence type="ECO:0000250" key="1">
    <source>
        <dbReference type="UniProtKB" id="P75796"/>
    </source>
</evidence>
<evidence type="ECO:0000255" key="2">
    <source>
        <dbReference type="PROSITE-ProRule" id="PRU00434"/>
    </source>
</evidence>
<evidence type="ECO:0000305" key="3"/>
<comment type="function">
    <text evidence="1">Part of the ABC transporter complex GsiABCD involved in glutathione import. Responsible for energy coupling to the transport system.</text>
</comment>
<comment type="catalytic activity">
    <reaction evidence="1">
        <text>glutathione(out) + ATP + H2O = glutathione(in) + ADP + phosphate + H(+)</text>
        <dbReference type="Rhea" id="RHEA:29791"/>
        <dbReference type="ChEBI" id="CHEBI:15377"/>
        <dbReference type="ChEBI" id="CHEBI:15378"/>
        <dbReference type="ChEBI" id="CHEBI:30616"/>
        <dbReference type="ChEBI" id="CHEBI:43474"/>
        <dbReference type="ChEBI" id="CHEBI:57925"/>
        <dbReference type="ChEBI" id="CHEBI:456216"/>
        <dbReference type="EC" id="7.4.2.10"/>
    </reaction>
</comment>
<comment type="subunit">
    <text evidence="1">The complex is composed of two ATP-binding proteins (GsiA), two transmembrane proteins (GsiC and GsiD) and a solute-binding protein (GsiB).</text>
</comment>
<comment type="subcellular location">
    <subcellularLocation>
        <location evidence="1">Cell inner membrane</location>
        <topology evidence="1">Peripheral membrane protein</topology>
    </subcellularLocation>
</comment>
<comment type="similarity">
    <text evidence="3">Belongs to the ABC transporter superfamily. Glutathione importer (TC 3.A.1.5.11) family.</text>
</comment>
<comment type="sequence caution" evidence="3">
    <conflict type="erroneous initiation">
        <sequence resource="EMBL-CDS" id="CAG75735"/>
    </conflict>
</comment>
<dbReference type="EC" id="7.4.2.10" evidence="1"/>
<dbReference type="EMBL" id="BX950851">
    <property type="protein sequence ID" value="CAG75735.1"/>
    <property type="status" value="ALT_INIT"/>
    <property type="molecule type" value="Genomic_DNA"/>
</dbReference>
<dbReference type="SMR" id="Q6D3A9"/>
<dbReference type="STRING" id="218491.ECA2835"/>
<dbReference type="KEGG" id="eca:ECA2835"/>
<dbReference type="eggNOG" id="COG4172">
    <property type="taxonomic scope" value="Bacteria"/>
</dbReference>
<dbReference type="HOGENOM" id="CLU_000604_86_2_6"/>
<dbReference type="Proteomes" id="UP000007966">
    <property type="component" value="Chromosome"/>
</dbReference>
<dbReference type="GO" id="GO:0005886">
    <property type="term" value="C:plasma membrane"/>
    <property type="evidence" value="ECO:0007669"/>
    <property type="project" value="UniProtKB-SubCell"/>
</dbReference>
<dbReference type="GO" id="GO:0005524">
    <property type="term" value="F:ATP binding"/>
    <property type="evidence" value="ECO:0007669"/>
    <property type="project" value="UniProtKB-KW"/>
</dbReference>
<dbReference type="GO" id="GO:0016887">
    <property type="term" value="F:ATP hydrolysis activity"/>
    <property type="evidence" value="ECO:0007669"/>
    <property type="project" value="InterPro"/>
</dbReference>
<dbReference type="GO" id="GO:0015833">
    <property type="term" value="P:peptide transport"/>
    <property type="evidence" value="ECO:0007669"/>
    <property type="project" value="InterPro"/>
</dbReference>
<dbReference type="GO" id="GO:0055085">
    <property type="term" value="P:transmembrane transport"/>
    <property type="evidence" value="ECO:0007669"/>
    <property type="project" value="UniProtKB-ARBA"/>
</dbReference>
<dbReference type="CDD" id="cd03257">
    <property type="entry name" value="ABC_NikE_OppD_transporters"/>
    <property type="match status" value="2"/>
</dbReference>
<dbReference type="FunFam" id="3.40.50.300:FF:000016">
    <property type="entry name" value="Oligopeptide ABC transporter ATP-binding component"/>
    <property type="match status" value="2"/>
</dbReference>
<dbReference type="Gene3D" id="3.40.50.300">
    <property type="entry name" value="P-loop containing nucleotide triphosphate hydrolases"/>
    <property type="match status" value="2"/>
</dbReference>
<dbReference type="InterPro" id="IPR003593">
    <property type="entry name" value="AAA+_ATPase"/>
</dbReference>
<dbReference type="InterPro" id="IPR050319">
    <property type="entry name" value="ABC_transp_ATP-bind"/>
</dbReference>
<dbReference type="InterPro" id="IPR003439">
    <property type="entry name" value="ABC_transporter-like_ATP-bd"/>
</dbReference>
<dbReference type="InterPro" id="IPR017871">
    <property type="entry name" value="ABC_transporter-like_CS"/>
</dbReference>
<dbReference type="InterPro" id="IPR013563">
    <property type="entry name" value="Oligopep_ABC_C"/>
</dbReference>
<dbReference type="InterPro" id="IPR027417">
    <property type="entry name" value="P-loop_NTPase"/>
</dbReference>
<dbReference type="NCBIfam" id="TIGR01727">
    <property type="entry name" value="oligo_HPY"/>
    <property type="match status" value="1"/>
</dbReference>
<dbReference type="NCBIfam" id="NF007739">
    <property type="entry name" value="PRK10419.1"/>
    <property type="match status" value="2"/>
</dbReference>
<dbReference type="NCBIfam" id="NF008453">
    <property type="entry name" value="PRK11308.1"/>
    <property type="match status" value="2"/>
</dbReference>
<dbReference type="PANTHER" id="PTHR43776:SF15">
    <property type="entry name" value="GLUTATHIONE IMPORT ATP-BINDING PROTEIN GSIA"/>
    <property type="match status" value="1"/>
</dbReference>
<dbReference type="PANTHER" id="PTHR43776">
    <property type="entry name" value="TRANSPORT ATP-BINDING PROTEIN"/>
    <property type="match status" value="1"/>
</dbReference>
<dbReference type="Pfam" id="PF00005">
    <property type="entry name" value="ABC_tran"/>
    <property type="match status" value="2"/>
</dbReference>
<dbReference type="Pfam" id="PF08352">
    <property type="entry name" value="oligo_HPY"/>
    <property type="match status" value="2"/>
</dbReference>
<dbReference type="SMART" id="SM00382">
    <property type="entry name" value="AAA"/>
    <property type="match status" value="2"/>
</dbReference>
<dbReference type="SUPFAM" id="SSF52540">
    <property type="entry name" value="P-loop containing nucleoside triphosphate hydrolases"/>
    <property type="match status" value="2"/>
</dbReference>
<dbReference type="PROSITE" id="PS00211">
    <property type="entry name" value="ABC_TRANSPORTER_1"/>
    <property type="match status" value="2"/>
</dbReference>
<dbReference type="PROSITE" id="PS50893">
    <property type="entry name" value="ABC_TRANSPORTER_2"/>
    <property type="match status" value="2"/>
</dbReference>
<proteinExistence type="inferred from homology"/>
<sequence>MSSPVPGLMLPEKRVVEVRNLSVYFEQQGQRTDAVRNLTFSVDRGETLAIVGESGSGKSVTSLALMRLVEHAGGVIHQGDMLFRRRDGQVLDLRGARQRVMRTLRGADLAMIFQEPMTSLNPVFPVGEQIAESIRLHQRMDRRAARAETLRMLDLVRIPEARNVLDRYPHQLSGGMRQRVMIAMALSCKPSLLIADEPTTALDVTIQAQILQLIRVLQREMDMAVIFITHDMGVVAEVAERVLVMHRGESVEAASVGQIFAAPQHPYTQGLLAAVPALGSMRGQPFPAKFPLLDQNTARIVDNVPQDTVPAHAEPILQVSNLVTRFPIRSGLLNRVTRQVHAVEKVSFDLWPGETLSLVGESGCGKSTTGRALLQLVESQKGDITFDGQRIHQLKGAALQHLRRDIQLIFQDPYASLDPRLTVGFSIMEPLLVHNVCRRQEAEKRVAWLLSRVGLEPEHARRYPHEFSGGQRQRVCIARALALNPKVVIADEAVSALDVSIQAQIINLMLELQREFGIAFLFISHDMAVVERISHRVAVMYMGQIVEIGPRQDVFERPQHPYTRKLMSAVPVADPSRRQREQVLLVDEIPSPIRAIGDEPTTAPLVQVGKRHFVAHHPIAGAY</sequence>
<feature type="chain" id="PRO_0000280017" description="Glutathione import ATP-binding protein GsiA">
    <location>
        <begin position="1"/>
        <end position="623"/>
    </location>
</feature>
<feature type="domain" description="ABC transporter 1" evidence="2">
    <location>
        <begin position="18"/>
        <end position="272"/>
    </location>
</feature>
<feature type="domain" description="ABC transporter 2" evidence="2">
    <location>
        <begin position="317"/>
        <end position="567"/>
    </location>
</feature>
<feature type="binding site" evidence="2">
    <location>
        <begin position="52"/>
        <end position="59"/>
    </location>
    <ligand>
        <name>ATP</name>
        <dbReference type="ChEBI" id="CHEBI:30616"/>
    </ligand>
</feature>
<feature type="binding site" evidence="2">
    <location>
        <begin position="360"/>
        <end position="367"/>
    </location>
    <ligand>
        <name>ATP</name>
        <dbReference type="ChEBI" id="CHEBI:30616"/>
    </ligand>
</feature>
<keyword id="KW-0067">ATP-binding</keyword>
<keyword id="KW-0997">Cell inner membrane</keyword>
<keyword id="KW-1003">Cell membrane</keyword>
<keyword id="KW-0378">Hydrolase</keyword>
<keyword id="KW-0472">Membrane</keyword>
<keyword id="KW-0547">Nucleotide-binding</keyword>
<keyword id="KW-1185">Reference proteome</keyword>
<keyword id="KW-0677">Repeat</keyword>
<keyword id="KW-1278">Translocase</keyword>
<keyword id="KW-0813">Transport</keyword>
<accession>Q6D3A9</accession>
<reference key="1">
    <citation type="journal article" date="2004" name="Proc. Natl. Acad. Sci. U.S.A.">
        <title>Genome sequence of the enterobacterial phytopathogen Erwinia carotovora subsp. atroseptica and characterization of virulence factors.</title>
        <authorList>
            <person name="Bell K.S."/>
            <person name="Sebaihia M."/>
            <person name="Pritchard L."/>
            <person name="Holden M.T.G."/>
            <person name="Hyman L.J."/>
            <person name="Holeva M.C."/>
            <person name="Thomson N.R."/>
            <person name="Bentley S.D."/>
            <person name="Churcher L.J.C."/>
            <person name="Mungall K."/>
            <person name="Atkin R."/>
            <person name="Bason N."/>
            <person name="Brooks K."/>
            <person name="Chillingworth T."/>
            <person name="Clark K."/>
            <person name="Doggett J."/>
            <person name="Fraser A."/>
            <person name="Hance Z."/>
            <person name="Hauser H."/>
            <person name="Jagels K."/>
            <person name="Moule S."/>
            <person name="Norbertczak H."/>
            <person name="Ormond D."/>
            <person name="Price C."/>
            <person name="Quail M.A."/>
            <person name="Sanders M."/>
            <person name="Walker D."/>
            <person name="Whitehead S."/>
            <person name="Salmond G.P.C."/>
            <person name="Birch P.R.J."/>
            <person name="Parkhill J."/>
            <person name="Toth I.K."/>
        </authorList>
    </citation>
    <scope>NUCLEOTIDE SEQUENCE [LARGE SCALE GENOMIC DNA]</scope>
    <source>
        <strain>SCRI 1043 / ATCC BAA-672</strain>
    </source>
</reference>
<name>GSIA_PECAS</name>